<organismHost>
    <name type="scientific">Homo sapiens</name>
    <name type="common">Human</name>
    <dbReference type="NCBI Taxonomy" id="9606"/>
</organismHost>
<proteinExistence type="inferred from homology"/>
<dbReference type="EMBL" id="M35027">
    <property type="protein sequence ID" value="AAA48173.1"/>
    <property type="molecule type" value="Genomic_DNA"/>
</dbReference>
<dbReference type="PIR" id="B40897">
    <property type="entry name" value="FAVZVR"/>
</dbReference>
<dbReference type="SMR" id="P68695"/>
<dbReference type="Proteomes" id="UP000008269">
    <property type="component" value="Segment"/>
</dbReference>
<dbReference type="GO" id="GO:0043657">
    <property type="term" value="C:host cell"/>
    <property type="evidence" value="ECO:0007669"/>
    <property type="project" value="GOC"/>
</dbReference>
<dbReference type="GO" id="GO:0030430">
    <property type="term" value="C:host cell cytoplasm"/>
    <property type="evidence" value="ECO:0007669"/>
    <property type="project" value="UniProtKB-SubCell"/>
</dbReference>
<dbReference type="GO" id="GO:0003779">
    <property type="term" value="F:actin binding"/>
    <property type="evidence" value="ECO:0007669"/>
    <property type="project" value="UniProtKB-KW"/>
</dbReference>
<dbReference type="GO" id="GO:0039680">
    <property type="term" value="P:actin-dependent intracellular transport of virus towards nucleus"/>
    <property type="evidence" value="ECO:0007669"/>
    <property type="project" value="UniProtKB-KW"/>
</dbReference>
<dbReference type="GO" id="GO:0046718">
    <property type="term" value="P:symbiont entry into host cell"/>
    <property type="evidence" value="ECO:0007669"/>
    <property type="project" value="UniProtKB-KW"/>
</dbReference>
<dbReference type="Gene3D" id="3.30.450.30">
    <property type="entry name" value="Dynein light chain 2a, cytoplasmic"/>
    <property type="match status" value="1"/>
</dbReference>
<dbReference type="InterPro" id="IPR048278">
    <property type="entry name" value="PFN"/>
</dbReference>
<dbReference type="InterPro" id="IPR005455">
    <property type="entry name" value="PFN_euk"/>
</dbReference>
<dbReference type="InterPro" id="IPR036140">
    <property type="entry name" value="PFN_sf"/>
</dbReference>
<dbReference type="InterPro" id="IPR027310">
    <property type="entry name" value="Profilin_CS"/>
</dbReference>
<dbReference type="Pfam" id="PF00235">
    <property type="entry name" value="Profilin"/>
    <property type="match status" value="1"/>
</dbReference>
<dbReference type="SMART" id="SM00392">
    <property type="entry name" value="PROF"/>
    <property type="match status" value="1"/>
</dbReference>
<dbReference type="SUPFAM" id="SSF55770">
    <property type="entry name" value="Profilin (actin-binding protein)"/>
    <property type="match status" value="1"/>
</dbReference>
<dbReference type="PROSITE" id="PS00414">
    <property type="entry name" value="PROFILIN"/>
    <property type="match status" value="1"/>
</dbReference>
<reference key="1">
    <citation type="journal article" date="1990" name="Virology">
        <title>The complete DNA sequence of vaccinia virus.</title>
        <authorList>
            <person name="Goebel S.J."/>
            <person name="Johnson G.P."/>
            <person name="Perkus M.E."/>
            <person name="Davis S.W."/>
            <person name="Winslow J.P."/>
            <person name="Paoletti E."/>
        </authorList>
    </citation>
    <scope>NUCLEOTIDE SEQUENCE [LARGE SCALE GENOMIC DNA]</scope>
</reference>
<reference key="2">
    <citation type="journal article" date="1990" name="Virology">
        <title>Appendix to 'The complete DNA sequence of vaccinia virus'.</title>
        <authorList>
            <person name="Goebel S.J."/>
            <person name="Johnson G.P."/>
            <person name="Perkus M.E."/>
            <person name="Davis S.W."/>
            <person name="Winslow J.P."/>
            <person name="Paoletti E."/>
        </authorList>
    </citation>
    <scope>NUCLEOTIDE SEQUENCE [LARGE SCALE GENOMIC DNA]</scope>
</reference>
<gene>
    <name type="primary">OPG171</name>
    <name type="ORF">A42R</name>
</gene>
<comment type="function">
    <text evidence="1">Participates in either intracellular transport of viral proteins or intercellular spread of the virus. Cellular profilins modulate actin filament dynamics (polymerization and depolymerization) via direct binding to actin through an actin-binding domain as well as by modulation of other actin-binding proteins. In contrast to cellular homologs, the poxvirus profilins seem to bind actin only weakly (By similarity).</text>
</comment>
<comment type="subunit">
    <text evidence="1">Interacts with host TPM1. Interacts with protein A25 (By similarity).</text>
</comment>
<comment type="subcellular location">
    <subcellularLocation>
        <location>Host cytoplasm</location>
    </subcellularLocation>
    <text>Localizes to inclusion bodies formed by viral A25/ATI protein in the cytoplasm of the host cell.</text>
</comment>
<comment type="similarity">
    <text evidence="2">Belongs to the profilin family.</text>
</comment>
<feature type="chain" id="PRO_0000199681" description="Profilin">
    <location>
        <begin position="1"/>
        <end position="133"/>
    </location>
</feature>
<protein>
    <recommendedName>
        <fullName>Profilin</fullName>
    </recommendedName>
</protein>
<accession>P68695</accession>
<accession>P20844</accession>
<name>PROF_VACCC</name>
<organism>
    <name type="scientific">Vaccinia virus (strain Copenhagen)</name>
    <name type="common">VACV</name>
    <dbReference type="NCBI Taxonomy" id="10249"/>
    <lineage>
        <taxon>Viruses</taxon>
        <taxon>Varidnaviria</taxon>
        <taxon>Bamfordvirae</taxon>
        <taxon>Nucleocytoviricota</taxon>
        <taxon>Pokkesviricetes</taxon>
        <taxon>Chitovirales</taxon>
        <taxon>Poxviridae</taxon>
        <taxon>Chordopoxvirinae</taxon>
        <taxon>Orthopoxvirus</taxon>
        <taxon>Vaccinia virus</taxon>
    </lineage>
</organism>
<sequence>MAEWHKIIEDISKNNKFEDAAIVDYKTTKNVLAAIPNRTFAKINPGEIIPLITNRNILKPLIGQKYCIVYTNSLMDENTYAMELLTGYAPVSPIVIARTHTALIFLMGKPTTSRRDVYRTCRDHATRVRATGN</sequence>
<evidence type="ECO:0000250" key="1"/>
<evidence type="ECO:0000305" key="2"/>
<keyword id="KW-0009">Actin-binding</keyword>
<keyword id="KW-1178">Actin-dependent inwards viral transport</keyword>
<keyword id="KW-1176">Cytoplasmic inwards viral transport</keyword>
<keyword id="KW-1035">Host cytoplasm</keyword>
<keyword id="KW-0945">Host-virus interaction</keyword>
<keyword id="KW-1185">Reference proteome</keyword>
<keyword id="KW-1160">Virus entry into host cell</keyword>